<evidence type="ECO:0000255" key="1">
    <source>
        <dbReference type="HAMAP-Rule" id="MF_01595"/>
    </source>
</evidence>
<evidence type="ECO:0000256" key="2">
    <source>
        <dbReference type="SAM" id="MobiDB-lite"/>
    </source>
</evidence>
<reference key="1">
    <citation type="journal article" date="2009" name="BMC Genomics">
        <title>Evidence for niche adaptation in the genome of the bovine pathogen Streptococcus uberis.</title>
        <authorList>
            <person name="Ward P.N."/>
            <person name="Holden M.T.G."/>
            <person name="Leigh J.A."/>
            <person name="Lennard N."/>
            <person name="Bignell A."/>
            <person name="Barron A."/>
            <person name="Clark L."/>
            <person name="Quail M.A."/>
            <person name="Woodward J."/>
            <person name="Barrell B.G."/>
            <person name="Egan S.A."/>
            <person name="Field T.R."/>
            <person name="Maskell D."/>
            <person name="Kehoe M."/>
            <person name="Dowson C.G."/>
            <person name="Chanter N."/>
            <person name="Whatmore A.M."/>
            <person name="Bentley S.D."/>
            <person name="Parkhill J."/>
        </authorList>
    </citation>
    <scope>NUCLEOTIDE SEQUENCE [LARGE SCALE GENOMIC DNA]</scope>
    <source>
        <strain>ATCC BAA-854 / 0140J</strain>
    </source>
</reference>
<comment type="function">
    <text evidence="1">Involved in mRNA degradation. Catalyzes the phosphorolysis of single-stranded polyribonucleotides processively in the 3'- to 5'-direction.</text>
</comment>
<comment type="catalytic activity">
    <reaction evidence="1">
        <text>RNA(n+1) + phosphate = RNA(n) + a ribonucleoside 5'-diphosphate</text>
        <dbReference type="Rhea" id="RHEA:22096"/>
        <dbReference type="Rhea" id="RHEA-COMP:14527"/>
        <dbReference type="Rhea" id="RHEA-COMP:17342"/>
        <dbReference type="ChEBI" id="CHEBI:43474"/>
        <dbReference type="ChEBI" id="CHEBI:57930"/>
        <dbReference type="ChEBI" id="CHEBI:140395"/>
        <dbReference type="EC" id="2.7.7.8"/>
    </reaction>
</comment>
<comment type="cofactor">
    <cofactor evidence="1">
        <name>Mg(2+)</name>
        <dbReference type="ChEBI" id="CHEBI:18420"/>
    </cofactor>
</comment>
<comment type="subcellular location">
    <subcellularLocation>
        <location evidence="1">Cytoplasm</location>
    </subcellularLocation>
</comment>
<comment type="similarity">
    <text evidence="1">Belongs to the polyribonucleotide nucleotidyltransferase family.</text>
</comment>
<keyword id="KW-0963">Cytoplasm</keyword>
<keyword id="KW-0460">Magnesium</keyword>
<keyword id="KW-0479">Metal-binding</keyword>
<keyword id="KW-0548">Nucleotidyltransferase</keyword>
<keyword id="KW-1185">Reference proteome</keyword>
<keyword id="KW-0694">RNA-binding</keyword>
<keyword id="KW-0808">Transferase</keyword>
<sequence>MSKQTFSTTFAGKPLVVEVGQVAKQANGATVVRYGESTVLTAAVMSKKMATGDFFPLQVNYEEKMYAAGKFPGGFMKREGRPSTDATLTARLIDRPIRPMFAEGFRNEIQVINTVLSYDENASAPMAAMFGSSLALSISDIPFNGPIAGVQVGYIDGEFIINPDKAQMEASLLELTVAGSKEAINMVESGAKELSEDIMLEALLKGHQAIQELIAFQEEIVAAVGKEKAEVELLQVDADLQAEIVAKYNADLQKAVQVEEKKAREAATEAVKETVKAEYEAKFAEDENLATIMRDVAEILEQMEHAEVRRLITEDKVRPDGRKVDEIRPLDAQIDFLPKVHGSGLFTRGQTQALSVLTLAPMGDTQIIDGLDDEYKKRFLHHYNFPQYSVGETGRYGAAGRREIGHGALGERALEQVLPSLEEFPYAIRLVAEVLESNGSSSQASICAGTLALMAGGVPIKAPVAGIAMGLISDGTNYTVLTDIQGLEDHFGDMDFKVAGTRDGITALQMDIKIEGITPQILEEALAQAKKARFEILDLIETTIPAPRPELAPTAPKIDTIQIDVDKIKIVIGKGGETIDKIIAETGVKIDIDEEGLVQIFSSDQAAIDRTKEIITSLVREAKVGEVYHAKVVRIEKFGAFVNLFDKTDALVHISEIAWTRTANVSDVLEVGEEVDVKVIKVDDKGRVDASMKALIPRPPKPEKKEEKASEAKEASNDQASKSQSETASEEK</sequence>
<proteinExistence type="inferred from homology"/>
<protein>
    <recommendedName>
        <fullName evidence="1">Polyribonucleotide nucleotidyltransferase</fullName>
        <ecNumber evidence="1">2.7.7.8</ecNumber>
    </recommendedName>
    <alternativeName>
        <fullName evidence="1">Polynucleotide phosphorylase</fullName>
        <shortName evidence="1">PNPase</shortName>
    </alternativeName>
</protein>
<gene>
    <name evidence="1" type="primary">pnp</name>
    <name type="ordered locus">SUB0267</name>
</gene>
<organism>
    <name type="scientific">Streptococcus uberis (strain ATCC BAA-854 / 0140J)</name>
    <dbReference type="NCBI Taxonomy" id="218495"/>
    <lineage>
        <taxon>Bacteria</taxon>
        <taxon>Bacillati</taxon>
        <taxon>Bacillota</taxon>
        <taxon>Bacilli</taxon>
        <taxon>Lactobacillales</taxon>
        <taxon>Streptococcaceae</taxon>
        <taxon>Streptococcus</taxon>
    </lineage>
</organism>
<feature type="chain" id="PRO_1000185755" description="Polyribonucleotide nucleotidyltransferase">
    <location>
        <begin position="1"/>
        <end position="732"/>
    </location>
</feature>
<feature type="domain" description="KH" evidence="1">
    <location>
        <begin position="556"/>
        <end position="615"/>
    </location>
</feature>
<feature type="domain" description="S1 motif" evidence="1">
    <location>
        <begin position="625"/>
        <end position="693"/>
    </location>
</feature>
<feature type="region of interest" description="Disordered" evidence="2">
    <location>
        <begin position="691"/>
        <end position="732"/>
    </location>
</feature>
<feature type="compositionally biased region" description="Basic and acidic residues" evidence="2">
    <location>
        <begin position="700"/>
        <end position="716"/>
    </location>
</feature>
<feature type="compositionally biased region" description="Polar residues" evidence="2">
    <location>
        <begin position="717"/>
        <end position="732"/>
    </location>
</feature>
<feature type="binding site" evidence="1">
    <location>
        <position position="489"/>
    </location>
    <ligand>
        <name>Mg(2+)</name>
        <dbReference type="ChEBI" id="CHEBI:18420"/>
    </ligand>
</feature>
<feature type="binding site" evidence="1">
    <location>
        <position position="495"/>
    </location>
    <ligand>
        <name>Mg(2+)</name>
        <dbReference type="ChEBI" id="CHEBI:18420"/>
    </ligand>
</feature>
<name>PNP_STRU0</name>
<accession>B9DTE3</accession>
<dbReference type="EC" id="2.7.7.8" evidence="1"/>
<dbReference type="EMBL" id="AM946015">
    <property type="protein sequence ID" value="CAR40790.1"/>
    <property type="molecule type" value="Genomic_DNA"/>
</dbReference>
<dbReference type="RefSeq" id="WP_012657815.1">
    <property type="nucleotide sequence ID" value="NC_012004.1"/>
</dbReference>
<dbReference type="SMR" id="B9DTE3"/>
<dbReference type="STRING" id="218495.SUB0267"/>
<dbReference type="KEGG" id="sub:SUB0267"/>
<dbReference type="eggNOG" id="COG1185">
    <property type="taxonomic scope" value="Bacteria"/>
</dbReference>
<dbReference type="HOGENOM" id="CLU_004217_2_2_9"/>
<dbReference type="OrthoDB" id="9804305at2"/>
<dbReference type="Proteomes" id="UP000000449">
    <property type="component" value="Chromosome"/>
</dbReference>
<dbReference type="GO" id="GO:0005829">
    <property type="term" value="C:cytosol"/>
    <property type="evidence" value="ECO:0007669"/>
    <property type="project" value="TreeGrafter"/>
</dbReference>
<dbReference type="GO" id="GO:0000175">
    <property type="term" value="F:3'-5'-RNA exonuclease activity"/>
    <property type="evidence" value="ECO:0007669"/>
    <property type="project" value="TreeGrafter"/>
</dbReference>
<dbReference type="GO" id="GO:0000287">
    <property type="term" value="F:magnesium ion binding"/>
    <property type="evidence" value="ECO:0007669"/>
    <property type="project" value="UniProtKB-UniRule"/>
</dbReference>
<dbReference type="GO" id="GO:0004654">
    <property type="term" value="F:polyribonucleotide nucleotidyltransferase activity"/>
    <property type="evidence" value="ECO:0007669"/>
    <property type="project" value="UniProtKB-UniRule"/>
</dbReference>
<dbReference type="GO" id="GO:0003723">
    <property type="term" value="F:RNA binding"/>
    <property type="evidence" value="ECO:0007669"/>
    <property type="project" value="UniProtKB-UniRule"/>
</dbReference>
<dbReference type="GO" id="GO:0006402">
    <property type="term" value="P:mRNA catabolic process"/>
    <property type="evidence" value="ECO:0007669"/>
    <property type="project" value="UniProtKB-UniRule"/>
</dbReference>
<dbReference type="GO" id="GO:0006396">
    <property type="term" value="P:RNA processing"/>
    <property type="evidence" value="ECO:0007669"/>
    <property type="project" value="InterPro"/>
</dbReference>
<dbReference type="CDD" id="cd02393">
    <property type="entry name" value="KH-I_PNPase"/>
    <property type="match status" value="1"/>
</dbReference>
<dbReference type="CDD" id="cd11363">
    <property type="entry name" value="RNase_PH_PNPase_1"/>
    <property type="match status" value="1"/>
</dbReference>
<dbReference type="CDD" id="cd11364">
    <property type="entry name" value="RNase_PH_PNPase_2"/>
    <property type="match status" value="1"/>
</dbReference>
<dbReference type="FunFam" id="2.40.50.140:FF:000023">
    <property type="entry name" value="Polyribonucleotide nucleotidyltransferase"/>
    <property type="match status" value="1"/>
</dbReference>
<dbReference type="FunFam" id="3.30.1370.10:FF:000001">
    <property type="entry name" value="Polyribonucleotide nucleotidyltransferase"/>
    <property type="match status" value="1"/>
</dbReference>
<dbReference type="FunFam" id="3.30.230.70:FF:000001">
    <property type="entry name" value="Polyribonucleotide nucleotidyltransferase"/>
    <property type="match status" value="1"/>
</dbReference>
<dbReference type="FunFam" id="3.30.230.70:FF:000002">
    <property type="entry name" value="Polyribonucleotide nucleotidyltransferase"/>
    <property type="match status" value="1"/>
</dbReference>
<dbReference type="Gene3D" id="3.30.230.70">
    <property type="entry name" value="GHMP Kinase, N-terminal domain"/>
    <property type="match status" value="2"/>
</dbReference>
<dbReference type="Gene3D" id="3.30.1370.10">
    <property type="entry name" value="K Homology domain, type 1"/>
    <property type="match status" value="1"/>
</dbReference>
<dbReference type="Gene3D" id="2.40.50.140">
    <property type="entry name" value="Nucleic acid-binding proteins"/>
    <property type="match status" value="1"/>
</dbReference>
<dbReference type="HAMAP" id="MF_01595">
    <property type="entry name" value="PNPase"/>
    <property type="match status" value="1"/>
</dbReference>
<dbReference type="InterPro" id="IPR001247">
    <property type="entry name" value="ExoRNase_PH_dom1"/>
</dbReference>
<dbReference type="InterPro" id="IPR015847">
    <property type="entry name" value="ExoRNase_PH_dom2"/>
</dbReference>
<dbReference type="InterPro" id="IPR036345">
    <property type="entry name" value="ExoRNase_PH_dom2_sf"/>
</dbReference>
<dbReference type="InterPro" id="IPR004087">
    <property type="entry name" value="KH_dom"/>
</dbReference>
<dbReference type="InterPro" id="IPR004088">
    <property type="entry name" value="KH_dom_type_1"/>
</dbReference>
<dbReference type="InterPro" id="IPR036612">
    <property type="entry name" value="KH_dom_type_1_sf"/>
</dbReference>
<dbReference type="InterPro" id="IPR012340">
    <property type="entry name" value="NA-bd_OB-fold"/>
</dbReference>
<dbReference type="InterPro" id="IPR012162">
    <property type="entry name" value="PNPase"/>
</dbReference>
<dbReference type="InterPro" id="IPR027408">
    <property type="entry name" value="PNPase/RNase_PH_dom_sf"/>
</dbReference>
<dbReference type="InterPro" id="IPR015848">
    <property type="entry name" value="PNPase_PH_RNA-bd_bac/org-type"/>
</dbReference>
<dbReference type="InterPro" id="IPR036456">
    <property type="entry name" value="PNPase_PH_RNA-bd_sf"/>
</dbReference>
<dbReference type="InterPro" id="IPR020568">
    <property type="entry name" value="Ribosomal_Su5_D2-typ_SF"/>
</dbReference>
<dbReference type="InterPro" id="IPR003029">
    <property type="entry name" value="S1_domain"/>
</dbReference>
<dbReference type="NCBIfam" id="TIGR03591">
    <property type="entry name" value="polynuc_phos"/>
    <property type="match status" value="1"/>
</dbReference>
<dbReference type="NCBIfam" id="NF008805">
    <property type="entry name" value="PRK11824.1"/>
    <property type="match status" value="1"/>
</dbReference>
<dbReference type="PANTHER" id="PTHR11252">
    <property type="entry name" value="POLYRIBONUCLEOTIDE NUCLEOTIDYLTRANSFERASE"/>
    <property type="match status" value="1"/>
</dbReference>
<dbReference type="PANTHER" id="PTHR11252:SF0">
    <property type="entry name" value="POLYRIBONUCLEOTIDE NUCLEOTIDYLTRANSFERASE 1, MITOCHONDRIAL"/>
    <property type="match status" value="1"/>
</dbReference>
<dbReference type="Pfam" id="PF00013">
    <property type="entry name" value="KH_1"/>
    <property type="match status" value="1"/>
</dbReference>
<dbReference type="Pfam" id="PF03726">
    <property type="entry name" value="PNPase"/>
    <property type="match status" value="1"/>
</dbReference>
<dbReference type="Pfam" id="PF01138">
    <property type="entry name" value="RNase_PH"/>
    <property type="match status" value="2"/>
</dbReference>
<dbReference type="Pfam" id="PF03725">
    <property type="entry name" value="RNase_PH_C"/>
    <property type="match status" value="2"/>
</dbReference>
<dbReference type="Pfam" id="PF00575">
    <property type="entry name" value="S1"/>
    <property type="match status" value="1"/>
</dbReference>
<dbReference type="PIRSF" id="PIRSF005499">
    <property type="entry name" value="PNPase"/>
    <property type="match status" value="1"/>
</dbReference>
<dbReference type="SMART" id="SM00322">
    <property type="entry name" value="KH"/>
    <property type="match status" value="1"/>
</dbReference>
<dbReference type="SMART" id="SM00316">
    <property type="entry name" value="S1"/>
    <property type="match status" value="1"/>
</dbReference>
<dbReference type="SUPFAM" id="SSF54791">
    <property type="entry name" value="Eukaryotic type KH-domain (KH-domain type I)"/>
    <property type="match status" value="1"/>
</dbReference>
<dbReference type="SUPFAM" id="SSF50249">
    <property type="entry name" value="Nucleic acid-binding proteins"/>
    <property type="match status" value="1"/>
</dbReference>
<dbReference type="SUPFAM" id="SSF46915">
    <property type="entry name" value="Polynucleotide phosphorylase/guanosine pentaphosphate synthase (PNPase/GPSI), domain 3"/>
    <property type="match status" value="1"/>
</dbReference>
<dbReference type="SUPFAM" id="SSF55666">
    <property type="entry name" value="Ribonuclease PH domain 2-like"/>
    <property type="match status" value="2"/>
</dbReference>
<dbReference type="SUPFAM" id="SSF54211">
    <property type="entry name" value="Ribosomal protein S5 domain 2-like"/>
    <property type="match status" value="2"/>
</dbReference>
<dbReference type="PROSITE" id="PS50084">
    <property type="entry name" value="KH_TYPE_1"/>
    <property type="match status" value="1"/>
</dbReference>
<dbReference type="PROSITE" id="PS50126">
    <property type="entry name" value="S1"/>
    <property type="match status" value="1"/>
</dbReference>